<sequence length="301" mass="33226">MRIEGVIVATVTPFTKDGVNYESLRTLLSKIVSEGYQGVFPTSSTGEVTKLTFEERVKVMEVAKEVAGGRALVVAGTGTGDHLSTIEIARRYKDVGVDALLITPPYYIQYDWAAIYAFYKRVLDKVDMPTILYTIPLATGYNIPVEVFELVANEYSQVVGVKDSSGDFRYHLDLIHLLGKRLSVLQGLDLLFVPSLLMGAQGGVLAGPNFLGRITLEQYRLVKEGKIAEAVALHNKLMPLWRFMGGCGLVGKLGGKWPTLYKVATQIVRGIDMGPPREPLPPIDDKDRRELEKLLKDLGLI</sequence>
<dbReference type="EC" id="4.-.-.-"/>
<dbReference type="EMBL" id="CP000504">
    <property type="protein sequence ID" value="ABL87487.1"/>
    <property type="status" value="ALT_INIT"/>
    <property type="molecule type" value="Genomic_DNA"/>
</dbReference>
<dbReference type="RefSeq" id="WP_053240262.1">
    <property type="nucleotide sequence ID" value="NC_008701.1"/>
</dbReference>
<dbReference type="SMR" id="A1RRA5"/>
<dbReference type="STRING" id="384616.Pisl_0309"/>
<dbReference type="GeneID" id="4616637"/>
<dbReference type="KEGG" id="pis:Pisl_0309"/>
<dbReference type="eggNOG" id="arCOG04172">
    <property type="taxonomic scope" value="Archaea"/>
</dbReference>
<dbReference type="HOGENOM" id="CLU_049343_5_1_2"/>
<dbReference type="OrthoDB" id="33636at2157"/>
<dbReference type="Proteomes" id="UP000002595">
    <property type="component" value="Chromosome"/>
</dbReference>
<dbReference type="GO" id="GO:0005737">
    <property type="term" value="C:cytoplasm"/>
    <property type="evidence" value="ECO:0007669"/>
    <property type="project" value="UniProtKB-SubCell"/>
</dbReference>
<dbReference type="GO" id="GO:0008675">
    <property type="term" value="F:2-dehydro-3-deoxy-phosphogluconate aldolase activity"/>
    <property type="evidence" value="ECO:0007669"/>
    <property type="project" value="UniProtKB-ARBA"/>
</dbReference>
<dbReference type="GO" id="GO:0008840">
    <property type="term" value="F:4-hydroxy-tetrahydrodipicolinate synthase activity"/>
    <property type="evidence" value="ECO:0007669"/>
    <property type="project" value="TreeGrafter"/>
</dbReference>
<dbReference type="CDD" id="cd00408">
    <property type="entry name" value="DHDPS-like"/>
    <property type="match status" value="1"/>
</dbReference>
<dbReference type="Gene3D" id="3.20.20.70">
    <property type="entry name" value="Aldolase class I"/>
    <property type="match status" value="1"/>
</dbReference>
<dbReference type="InterPro" id="IPR013785">
    <property type="entry name" value="Aldolase_TIM"/>
</dbReference>
<dbReference type="InterPro" id="IPR002220">
    <property type="entry name" value="DapA-like"/>
</dbReference>
<dbReference type="PANTHER" id="PTHR12128:SF66">
    <property type="entry name" value="4-HYDROXY-2-OXOGLUTARATE ALDOLASE, MITOCHONDRIAL"/>
    <property type="match status" value="1"/>
</dbReference>
<dbReference type="PANTHER" id="PTHR12128">
    <property type="entry name" value="DIHYDRODIPICOLINATE SYNTHASE"/>
    <property type="match status" value="1"/>
</dbReference>
<dbReference type="Pfam" id="PF00701">
    <property type="entry name" value="DHDPS"/>
    <property type="match status" value="1"/>
</dbReference>
<dbReference type="PIRSF" id="PIRSF001365">
    <property type="entry name" value="DHDPS"/>
    <property type="match status" value="1"/>
</dbReference>
<dbReference type="PRINTS" id="PR00146">
    <property type="entry name" value="DHPICSNTHASE"/>
</dbReference>
<dbReference type="SMART" id="SM01130">
    <property type="entry name" value="DHDPS"/>
    <property type="match status" value="1"/>
</dbReference>
<dbReference type="SUPFAM" id="SSF51569">
    <property type="entry name" value="Aldolase"/>
    <property type="match status" value="1"/>
</dbReference>
<accession>A1RRA5</accession>
<feature type="chain" id="PRO_0000340997" description="Uncharacterized DapA-like lyase Pisl_0309">
    <location>
        <begin position="1"/>
        <end position="301"/>
    </location>
</feature>
<feature type="active site" description="Charge relay system" evidence="1">
    <location>
        <position position="44"/>
    </location>
</feature>
<feature type="active site" description="Charge relay system" evidence="1">
    <location>
        <position position="107"/>
    </location>
</feature>
<feature type="active site" description="Proton donor" evidence="1">
    <location>
        <position position="133"/>
    </location>
</feature>
<feature type="active site" description="Schiff-base intermediate with substrate" evidence="1">
    <location>
        <position position="162"/>
    </location>
</feature>
<organism>
    <name type="scientific">Pyrobaculum islandicum (strain DSM 4184 / JCM 9189 / GEO3)</name>
    <dbReference type="NCBI Taxonomy" id="384616"/>
    <lineage>
        <taxon>Archaea</taxon>
        <taxon>Thermoproteota</taxon>
        <taxon>Thermoprotei</taxon>
        <taxon>Thermoproteales</taxon>
        <taxon>Thermoproteaceae</taxon>
        <taxon>Pyrobaculum</taxon>
    </lineage>
</organism>
<comment type="subunit">
    <text evidence="1">Homotetramer.</text>
</comment>
<comment type="subcellular location">
    <subcellularLocation>
        <location evidence="2">Cytoplasm</location>
    </subcellularLocation>
</comment>
<comment type="similarity">
    <text evidence="2">Belongs to the DapA family.</text>
</comment>
<comment type="sequence caution" evidence="2">
    <conflict type="erroneous initiation">
        <sequence resource="EMBL-CDS" id="ABL87487"/>
    </conflict>
    <text>Extended N-terminus.</text>
</comment>
<protein>
    <recommendedName>
        <fullName>Uncharacterized DapA-like lyase Pisl_0309</fullName>
        <ecNumber>4.-.-.-</ecNumber>
    </recommendedName>
</protein>
<gene>
    <name type="primary">dapAL</name>
    <name type="ordered locus">Pisl_0309</name>
</gene>
<proteinExistence type="inferred from homology"/>
<reference key="1">
    <citation type="submission" date="2006-12" db="EMBL/GenBank/DDBJ databases">
        <title>Complete sequence of Pyrobaculum islandicum DSM 4184.</title>
        <authorList>
            <person name="Copeland A."/>
            <person name="Lucas S."/>
            <person name="Lapidus A."/>
            <person name="Barry K."/>
            <person name="Detter J.C."/>
            <person name="Glavina del Rio T."/>
            <person name="Dalin E."/>
            <person name="Tice H."/>
            <person name="Pitluck S."/>
            <person name="Meincke L."/>
            <person name="Brettin T."/>
            <person name="Bruce D."/>
            <person name="Han C."/>
            <person name="Tapia R."/>
            <person name="Gilna P."/>
            <person name="Schmutz J."/>
            <person name="Larimer F."/>
            <person name="Land M."/>
            <person name="Hauser L."/>
            <person name="Kyrpides N."/>
            <person name="Mikhailova N."/>
            <person name="Cozen A.E."/>
            <person name="Fitz-Gibbon S.T."/>
            <person name="House C.H."/>
            <person name="Saltikov C."/>
            <person name="Lowe T."/>
            <person name="Richardson P."/>
        </authorList>
    </citation>
    <scope>NUCLEOTIDE SEQUENCE [LARGE SCALE GENOMIC DNA]</scope>
    <source>
        <strain>DSM 4184 / JCM 9189 / GEO3</strain>
    </source>
</reference>
<name>DAPAL_PYRIL</name>
<evidence type="ECO:0000250" key="1"/>
<evidence type="ECO:0000305" key="2"/>
<keyword id="KW-0963">Cytoplasm</keyword>
<keyword id="KW-0456">Lyase</keyword>
<keyword id="KW-0704">Schiff base</keyword>